<dbReference type="EMBL" id="AC036104">
    <property type="protein sequence ID" value="AAF81363.1"/>
    <property type="molecule type" value="Genomic_DNA"/>
</dbReference>
<dbReference type="EMBL" id="CP002684">
    <property type="protein sequence ID" value="AEE30073.1"/>
    <property type="molecule type" value="Genomic_DNA"/>
</dbReference>
<dbReference type="EMBL" id="AF334722">
    <property type="protein sequence ID" value="AAG50100.1"/>
    <property type="molecule type" value="mRNA"/>
</dbReference>
<dbReference type="EMBL" id="AK227392">
    <property type="protein sequence ID" value="BAE99397.1"/>
    <property type="molecule type" value="mRNA"/>
</dbReference>
<dbReference type="PIR" id="B86345">
    <property type="entry name" value="B86345"/>
</dbReference>
<dbReference type="RefSeq" id="NP_173542.1">
    <property type="nucleotide sequence ID" value="NM_101972.5"/>
</dbReference>
<dbReference type="SMR" id="Q9LMN4"/>
<dbReference type="ComplexPortal" id="CPX-1308">
    <property type="entry name" value="LSM1-7-PAT1 complex, variant LSM1A-LSM3A-LSM6A-PAT1"/>
</dbReference>
<dbReference type="ComplexPortal" id="CPX-1309">
    <property type="entry name" value="LSM2-8 complex, variant LSM3A-LSM6A"/>
</dbReference>
<dbReference type="ComplexPortal" id="CPX-1347">
    <property type="entry name" value="LSM1-7-PAT1 complex, variant LSM1B-LSM3A-LSM6A-PAT1"/>
</dbReference>
<dbReference type="ComplexPortal" id="CPX-1350">
    <property type="entry name" value="LSM1-7-PAT1 complex, variant LSM1B-LSM3A-LSM6B-PAT1"/>
</dbReference>
<dbReference type="ComplexPortal" id="CPX-1351">
    <property type="entry name" value="LSM1-7-PAT1 complex, variant LSM1A-LSM3A-LSM6B-PAT1"/>
</dbReference>
<dbReference type="ComplexPortal" id="CPX-1352">
    <property type="entry name" value="LSM2-8 complex, variant LSM3A-LSM6B"/>
</dbReference>
<dbReference type="ComplexPortal" id="CPX-1391">
    <property type="entry name" value="LSM1-7-PAT1 complex, variant LSM1A-LSM3A-LSM6A-PAT1H1"/>
</dbReference>
<dbReference type="ComplexPortal" id="CPX-1392">
    <property type="entry name" value="LSM1-7-PAT1 complex, variant LSM1A-LSM3A-LSM6B-PAT1H1"/>
</dbReference>
<dbReference type="ComplexPortal" id="CPX-1395">
    <property type="entry name" value="LSM1-7-PAT1 complex, variant LSM1B-LSM3A-LSM6A-PAT1H1"/>
</dbReference>
<dbReference type="ComplexPortal" id="CPX-1396">
    <property type="entry name" value="LSM1-7-PAT1 complex, variant LSM1B-LSM3A-LSM6B-PAT1H1"/>
</dbReference>
<dbReference type="ComplexPortal" id="CPX-1399">
    <property type="entry name" value="LSM1-7-PAT1 complex, variant LSM1A-LSM3A-LSM6A-PAT1H2"/>
</dbReference>
<dbReference type="ComplexPortal" id="CPX-1400">
    <property type="entry name" value="LSM1-7-PAT1 complex, variant LSM1A-LSM3A-LSM6B-PAT1H2"/>
</dbReference>
<dbReference type="ComplexPortal" id="CPX-1403">
    <property type="entry name" value="LSM1-7-PAT1 complex, variant LSM1B-LSM3A-LSM6A-PAT1H2"/>
</dbReference>
<dbReference type="ComplexPortal" id="CPX-1404">
    <property type="entry name" value="LSM1-7-PAT1 complex, variant LSM1B-LSM3A-LSM6B-PAT1H2"/>
</dbReference>
<dbReference type="FunCoup" id="Q9LMN4">
    <property type="interactions" value="3738"/>
</dbReference>
<dbReference type="IntAct" id="Q9LMN4">
    <property type="interactions" value="1"/>
</dbReference>
<dbReference type="STRING" id="3702.Q9LMN4"/>
<dbReference type="PaxDb" id="3702-AT1G21190.1"/>
<dbReference type="ProteomicsDB" id="238678"/>
<dbReference type="EnsemblPlants" id="AT1G21190.1">
    <property type="protein sequence ID" value="AT1G21190.1"/>
    <property type="gene ID" value="AT1G21190"/>
</dbReference>
<dbReference type="GeneID" id="838714"/>
<dbReference type="Gramene" id="AT1G21190.1">
    <property type="protein sequence ID" value="AT1G21190.1"/>
    <property type="gene ID" value="AT1G21190"/>
</dbReference>
<dbReference type="KEGG" id="ath:AT1G21190"/>
<dbReference type="Araport" id="AT1G21190"/>
<dbReference type="TAIR" id="AT1G21190">
    <property type="gene designation" value="LSM3A"/>
</dbReference>
<dbReference type="eggNOG" id="KOG3460">
    <property type="taxonomic scope" value="Eukaryota"/>
</dbReference>
<dbReference type="HOGENOM" id="CLU_076902_5_1_1"/>
<dbReference type="InParanoid" id="Q9LMN4"/>
<dbReference type="OMA" id="TYVKMRN"/>
<dbReference type="OrthoDB" id="29543at2759"/>
<dbReference type="PhylomeDB" id="Q9LMN4"/>
<dbReference type="PRO" id="PR:Q9LMN4"/>
<dbReference type="Proteomes" id="UP000006548">
    <property type="component" value="Chromosome 1"/>
</dbReference>
<dbReference type="ExpressionAtlas" id="Q9LMN4">
    <property type="expression patterns" value="baseline and differential"/>
</dbReference>
<dbReference type="GO" id="GO:1990726">
    <property type="term" value="C:Lsm1-7-Pat1 complex"/>
    <property type="evidence" value="ECO:0000303"/>
    <property type="project" value="ComplexPortal"/>
</dbReference>
<dbReference type="GO" id="GO:0120115">
    <property type="term" value="C:Lsm2-8 complex"/>
    <property type="evidence" value="ECO:0000315"/>
    <property type="project" value="ComplexPortal"/>
</dbReference>
<dbReference type="GO" id="GO:0005634">
    <property type="term" value="C:nucleus"/>
    <property type="evidence" value="ECO:0000314"/>
    <property type="project" value="ComplexPortal"/>
</dbReference>
<dbReference type="GO" id="GO:0000932">
    <property type="term" value="C:P-body"/>
    <property type="evidence" value="ECO:0000303"/>
    <property type="project" value="ComplexPortal"/>
</dbReference>
<dbReference type="GO" id="GO:0005681">
    <property type="term" value="C:spliceosomal complex"/>
    <property type="evidence" value="ECO:0007669"/>
    <property type="project" value="UniProtKB-KW"/>
</dbReference>
<dbReference type="GO" id="GO:0003723">
    <property type="term" value="F:RNA binding"/>
    <property type="evidence" value="ECO:0007669"/>
    <property type="project" value="UniProtKB-KW"/>
</dbReference>
<dbReference type="GO" id="GO:0000290">
    <property type="term" value="P:deadenylation-dependent decapping of nuclear-transcribed mRNA"/>
    <property type="evidence" value="ECO:0000303"/>
    <property type="project" value="ComplexPortal"/>
</dbReference>
<dbReference type="GO" id="GO:0000398">
    <property type="term" value="P:mRNA splicing, via spliceosome"/>
    <property type="evidence" value="ECO:0000315"/>
    <property type="project" value="ComplexPortal"/>
</dbReference>
<dbReference type="CDD" id="cd01730">
    <property type="entry name" value="LSm3"/>
    <property type="match status" value="1"/>
</dbReference>
<dbReference type="FunFam" id="2.30.30.100:FF:000007">
    <property type="entry name" value="U6 snRNA-associated Sm-like protein LSm3"/>
    <property type="match status" value="1"/>
</dbReference>
<dbReference type="Gene3D" id="2.30.30.100">
    <property type="match status" value="1"/>
</dbReference>
<dbReference type="InterPro" id="IPR034105">
    <property type="entry name" value="Lsm3"/>
</dbReference>
<dbReference type="InterPro" id="IPR010920">
    <property type="entry name" value="LSM_dom_sf"/>
</dbReference>
<dbReference type="InterPro" id="IPR047575">
    <property type="entry name" value="Sm"/>
</dbReference>
<dbReference type="InterPro" id="IPR040002">
    <property type="entry name" value="Sm-like_LSM3"/>
</dbReference>
<dbReference type="InterPro" id="IPR001163">
    <property type="entry name" value="Sm_dom_euk/arc"/>
</dbReference>
<dbReference type="PANTHER" id="PTHR13110">
    <property type="entry name" value="U6 SNRNA-ASSOCIATED SM-LIKE PROTEIN LSM3"/>
    <property type="match status" value="1"/>
</dbReference>
<dbReference type="Pfam" id="PF01423">
    <property type="entry name" value="LSM"/>
    <property type="match status" value="1"/>
</dbReference>
<dbReference type="SMART" id="SM00651">
    <property type="entry name" value="Sm"/>
    <property type="match status" value="1"/>
</dbReference>
<dbReference type="SUPFAM" id="SSF50182">
    <property type="entry name" value="Sm-like ribonucleoproteins"/>
    <property type="match status" value="1"/>
</dbReference>
<dbReference type="PROSITE" id="PS52002">
    <property type="entry name" value="SM"/>
    <property type="match status" value="1"/>
</dbReference>
<keyword id="KW-0007">Acetylation</keyword>
<keyword id="KW-0963">Cytoplasm</keyword>
<keyword id="KW-0507">mRNA processing</keyword>
<keyword id="KW-0508">mRNA splicing</keyword>
<keyword id="KW-0539">Nucleus</keyword>
<keyword id="KW-1185">Reference proteome</keyword>
<keyword id="KW-0687">Ribonucleoprotein</keyword>
<keyword id="KW-0694">RNA-binding</keyword>
<keyword id="KW-0747">Spliceosome</keyword>
<gene>
    <name evidence="5" type="primary">LSM3A</name>
    <name evidence="8" type="ordered locus">At1g21190</name>
    <name evidence="9" type="ORF">F16F4.12</name>
</gene>
<name>LSM3A_ARATH</name>
<accession>Q9LMN4</accession>
<accession>Q0WU01</accession>
<comment type="function">
    <text evidence="3 4">Component of LSM protein complexes, which are involved in RNA processing. Component of the cytoplasmic LSM1-LSM7 complex which is involved in mRNA degradation by promoting decapping and leading to accurate 5'-3' mRNA decay. The cytoplasmic LSM1-LSM7 complex regulates developmental gene expression by the decapping of specific development-related transcripts. Component of the nuclear LSM2-LSM8 complex which is involved splicing nuclear mRNAs. LSM2-LSM8 binds directly to the U6 small nuclear RNAs (snRNAs) and is essential for accurate splicing of selected development-related mRNAs through the stabilization of the spliceosomal U6 snRNA. Plays a critical role in the regulation of development-related gene expression.</text>
</comment>
<comment type="subunit">
    <text evidence="3 4">Component of the heptameric LSM1-LSM7 complex that forms a seven-membered ring structure with a donut shape. The LSM subunits are arranged in the order LSM1, LSM2, LSM3, LSM6, LSM5, LSM7 and LSM4. Component of the heptameric LSM2-LSM8 complex that forms a seven-membered ring structure with a donut shape. The LSM subunits are arranged in the order LSM8, LSM2, LSM3, LSM6, LSM5, LSM7 and LSM4 (PubMed:23221597, PubMed:23620288). LSM3A subunit interacts only with its two neighboring subunits, LSM2 and LSM6A or LSM6B (PubMed:23221597).</text>
</comment>
<comment type="subcellular location">
    <subcellularLocation>
        <location evidence="3">Cytoplasm</location>
    </subcellularLocation>
    <subcellularLocation>
        <location evidence="3">Nucleus</location>
    </subcellularLocation>
</comment>
<comment type="tissue specificity">
    <text evidence="3 4">Expressed in roots, leaves, stems, flowers and siliques.</text>
</comment>
<comment type="similarity">
    <text evidence="7">Belongs to the snRNP Sm proteins family.</text>
</comment>
<feature type="initiator methionine" description="Removed" evidence="1">
    <location>
        <position position="1"/>
    </location>
</feature>
<feature type="chain" id="PRO_0000431644" description="Sm-like protein LSM3A">
    <location>
        <begin position="2"/>
        <end position="97"/>
    </location>
</feature>
<feature type="domain" description="Sm" evidence="2">
    <location>
        <begin position="11"/>
        <end position="96"/>
    </location>
</feature>
<feature type="modified residue" description="N-acetylserine" evidence="1">
    <location>
        <position position="2"/>
    </location>
</feature>
<proteinExistence type="evidence at protein level"/>
<reference key="1">
    <citation type="journal article" date="2000" name="Nature">
        <title>Sequence and analysis of chromosome 1 of the plant Arabidopsis thaliana.</title>
        <authorList>
            <person name="Theologis A."/>
            <person name="Ecker J.R."/>
            <person name="Palm C.J."/>
            <person name="Federspiel N.A."/>
            <person name="Kaul S."/>
            <person name="White O."/>
            <person name="Alonso J."/>
            <person name="Altafi H."/>
            <person name="Araujo R."/>
            <person name="Bowman C.L."/>
            <person name="Brooks S.Y."/>
            <person name="Buehler E."/>
            <person name="Chan A."/>
            <person name="Chao Q."/>
            <person name="Chen H."/>
            <person name="Cheuk R.F."/>
            <person name="Chin C.W."/>
            <person name="Chung M.K."/>
            <person name="Conn L."/>
            <person name="Conway A.B."/>
            <person name="Conway A.R."/>
            <person name="Creasy T.H."/>
            <person name="Dewar K."/>
            <person name="Dunn P."/>
            <person name="Etgu P."/>
            <person name="Feldblyum T.V."/>
            <person name="Feng J.-D."/>
            <person name="Fong B."/>
            <person name="Fujii C.Y."/>
            <person name="Gill J.E."/>
            <person name="Goldsmith A.D."/>
            <person name="Haas B."/>
            <person name="Hansen N.F."/>
            <person name="Hughes B."/>
            <person name="Huizar L."/>
            <person name="Hunter J.L."/>
            <person name="Jenkins J."/>
            <person name="Johnson-Hopson C."/>
            <person name="Khan S."/>
            <person name="Khaykin E."/>
            <person name="Kim C.J."/>
            <person name="Koo H.L."/>
            <person name="Kremenetskaia I."/>
            <person name="Kurtz D.B."/>
            <person name="Kwan A."/>
            <person name="Lam B."/>
            <person name="Langin-Hooper S."/>
            <person name="Lee A."/>
            <person name="Lee J.M."/>
            <person name="Lenz C.A."/>
            <person name="Li J.H."/>
            <person name="Li Y.-P."/>
            <person name="Lin X."/>
            <person name="Liu S.X."/>
            <person name="Liu Z.A."/>
            <person name="Luros J.S."/>
            <person name="Maiti R."/>
            <person name="Marziali A."/>
            <person name="Militscher J."/>
            <person name="Miranda M."/>
            <person name="Nguyen M."/>
            <person name="Nierman W.C."/>
            <person name="Osborne B.I."/>
            <person name="Pai G."/>
            <person name="Peterson J."/>
            <person name="Pham P.K."/>
            <person name="Rizzo M."/>
            <person name="Rooney T."/>
            <person name="Rowley D."/>
            <person name="Sakano H."/>
            <person name="Salzberg S.L."/>
            <person name="Schwartz J.R."/>
            <person name="Shinn P."/>
            <person name="Southwick A.M."/>
            <person name="Sun H."/>
            <person name="Tallon L.J."/>
            <person name="Tambunga G."/>
            <person name="Toriumi M.J."/>
            <person name="Town C.D."/>
            <person name="Utterback T."/>
            <person name="Van Aken S."/>
            <person name="Vaysberg M."/>
            <person name="Vysotskaia V.S."/>
            <person name="Walker M."/>
            <person name="Wu D."/>
            <person name="Yu G."/>
            <person name="Fraser C.M."/>
            <person name="Venter J.C."/>
            <person name="Davis R.W."/>
        </authorList>
    </citation>
    <scope>NUCLEOTIDE SEQUENCE [LARGE SCALE GENOMIC DNA]</scope>
    <source>
        <strain>cv. Columbia</strain>
    </source>
</reference>
<reference key="2">
    <citation type="journal article" date="2017" name="Plant J.">
        <title>Araport11: a complete reannotation of the Arabidopsis thaliana reference genome.</title>
        <authorList>
            <person name="Cheng C.Y."/>
            <person name="Krishnakumar V."/>
            <person name="Chan A.P."/>
            <person name="Thibaud-Nissen F."/>
            <person name="Schobel S."/>
            <person name="Town C.D."/>
        </authorList>
    </citation>
    <scope>GENOME REANNOTATION</scope>
    <source>
        <strain>cv. Columbia</strain>
    </source>
</reference>
<reference key="3">
    <citation type="journal article" date="2003" name="Science">
        <title>Empirical analysis of transcriptional activity in the Arabidopsis genome.</title>
        <authorList>
            <person name="Yamada K."/>
            <person name="Lim J."/>
            <person name="Dale J.M."/>
            <person name="Chen H."/>
            <person name="Shinn P."/>
            <person name="Palm C.J."/>
            <person name="Southwick A.M."/>
            <person name="Wu H.C."/>
            <person name="Kim C.J."/>
            <person name="Nguyen M."/>
            <person name="Pham P.K."/>
            <person name="Cheuk R.F."/>
            <person name="Karlin-Newmann G."/>
            <person name="Liu S.X."/>
            <person name="Lam B."/>
            <person name="Sakano H."/>
            <person name="Wu T."/>
            <person name="Yu G."/>
            <person name="Miranda M."/>
            <person name="Quach H.L."/>
            <person name="Tripp M."/>
            <person name="Chang C.H."/>
            <person name="Lee J.M."/>
            <person name="Toriumi M.J."/>
            <person name="Chan M.M."/>
            <person name="Tang C.C."/>
            <person name="Onodera C.S."/>
            <person name="Deng J.M."/>
            <person name="Akiyama K."/>
            <person name="Ansari Y."/>
            <person name="Arakawa T."/>
            <person name="Banh J."/>
            <person name="Banno F."/>
            <person name="Bowser L."/>
            <person name="Brooks S.Y."/>
            <person name="Carninci P."/>
            <person name="Chao Q."/>
            <person name="Choy N."/>
            <person name="Enju A."/>
            <person name="Goldsmith A.D."/>
            <person name="Gurjal M."/>
            <person name="Hansen N.F."/>
            <person name="Hayashizaki Y."/>
            <person name="Johnson-Hopson C."/>
            <person name="Hsuan V.W."/>
            <person name="Iida K."/>
            <person name="Karnes M."/>
            <person name="Khan S."/>
            <person name="Koesema E."/>
            <person name="Ishida J."/>
            <person name="Jiang P.X."/>
            <person name="Jones T."/>
            <person name="Kawai J."/>
            <person name="Kamiya A."/>
            <person name="Meyers C."/>
            <person name="Nakajima M."/>
            <person name="Narusaka M."/>
            <person name="Seki M."/>
            <person name="Sakurai T."/>
            <person name="Satou M."/>
            <person name="Tamse R."/>
            <person name="Vaysberg M."/>
            <person name="Wallender E.K."/>
            <person name="Wong C."/>
            <person name="Yamamura Y."/>
            <person name="Yuan S."/>
            <person name="Shinozaki K."/>
            <person name="Davis R.W."/>
            <person name="Theologis A."/>
            <person name="Ecker J.R."/>
        </authorList>
    </citation>
    <scope>NUCLEOTIDE SEQUENCE [LARGE SCALE MRNA]</scope>
    <source>
        <strain>cv. Columbia</strain>
    </source>
</reference>
<reference key="4">
    <citation type="submission" date="2006-07" db="EMBL/GenBank/DDBJ databases">
        <title>Large-scale analysis of RIKEN Arabidopsis full-length (RAFL) cDNAs.</title>
        <authorList>
            <person name="Totoki Y."/>
            <person name="Seki M."/>
            <person name="Ishida J."/>
            <person name="Nakajima M."/>
            <person name="Enju A."/>
            <person name="Kamiya A."/>
            <person name="Narusaka M."/>
            <person name="Shin-i T."/>
            <person name="Nakagawa M."/>
            <person name="Sakamoto N."/>
            <person name="Oishi K."/>
            <person name="Kohara Y."/>
            <person name="Kobayashi M."/>
            <person name="Toyoda A."/>
            <person name="Sakaki Y."/>
            <person name="Sakurai T."/>
            <person name="Iida K."/>
            <person name="Akiyama K."/>
            <person name="Satou M."/>
            <person name="Toyoda T."/>
            <person name="Konagaya A."/>
            <person name="Carninci P."/>
            <person name="Kawai J."/>
            <person name="Hayashizaki Y."/>
            <person name="Shinozaki K."/>
        </authorList>
    </citation>
    <scope>NUCLEOTIDE SEQUENCE [LARGE SCALE MRNA] OF 2-97</scope>
    <source>
        <strain>cv. Columbia</strain>
    </source>
</reference>
<reference key="5">
    <citation type="journal article" date="2012" name="Plant Cell">
        <title>LSM proteins provide accurate splicing and decay of selected transcripts to ensure normal Arabidopsis development.</title>
        <authorList>
            <person name="Perea-Resa C."/>
            <person name="Hernandez-Verdeja T."/>
            <person name="Lopez-Cobollo R."/>
            <person name="del Mar Castellano M."/>
            <person name="Salinas J."/>
        </authorList>
    </citation>
    <scope>FUNCTION</scope>
    <scope>SUBUNIT</scope>
    <scope>INTERACTION WITH LSM2; LSM6A AND LSM6B</scope>
    <scope>SUBCELLULAR LOCATION</scope>
    <scope>TISSUE SPECIFICITY</scope>
    <scope>GENE FAMILY</scope>
</reference>
<reference key="6">
    <citation type="journal article" date="2013" name="Nucleic Acids Res.">
        <title>Arabidopsis thaliana LSM proteins function in mRNA splicing and degradation.</title>
        <authorList>
            <person name="Golisz A."/>
            <person name="Sikorski P.J."/>
            <person name="Kruszka K."/>
            <person name="Kufel J."/>
        </authorList>
    </citation>
    <scope>IDENTIFICATION BY MASS SPECTROMETRY</scope>
    <scope>FUNCTION</scope>
    <scope>SUBUNIT</scope>
    <scope>TISSUE SPECIFICITY</scope>
</reference>
<protein>
    <recommendedName>
        <fullName evidence="7">Sm-like protein LSM3A</fullName>
        <shortName evidence="6">AtLSM3A</shortName>
    </recommendedName>
    <alternativeName>
        <fullName evidence="7">U6 snRNA-associated Sm-like protein LSM3A</fullName>
    </alternativeName>
</protein>
<evidence type="ECO:0000250" key="1">
    <source>
        <dbReference type="UniProtKB" id="Q9C6K5"/>
    </source>
</evidence>
<evidence type="ECO:0000255" key="2">
    <source>
        <dbReference type="PROSITE-ProRule" id="PRU01346"/>
    </source>
</evidence>
<evidence type="ECO:0000269" key="3">
    <source>
    </source>
</evidence>
<evidence type="ECO:0000269" key="4">
    <source>
    </source>
</evidence>
<evidence type="ECO:0000303" key="5">
    <source>
    </source>
</evidence>
<evidence type="ECO:0000303" key="6">
    <source>
    </source>
</evidence>
<evidence type="ECO:0000305" key="7"/>
<evidence type="ECO:0000312" key="8">
    <source>
        <dbReference type="Araport" id="AT1G21190"/>
    </source>
</evidence>
<evidence type="ECO:0000312" key="9">
    <source>
        <dbReference type="EMBL" id="AAF81363.1"/>
    </source>
</evidence>
<sequence>MSVEEDATVREPLDLIRLSIEERIYVKLRSDRELRGKLHAFDQHLNMILGDVEEVITTIEIDDETYEEIVRTTKRTVPFLFVRGDGVILVSPPLRTT</sequence>
<organism>
    <name type="scientific">Arabidopsis thaliana</name>
    <name type="common">Mouse-ear cress</name>
    <dbReference type="NCBI Taxonomy" id="3702"/>
    <lineage>
        <taxon>Eukaryota</taxon>
        <taxon>Viridiplantae</taxon>
        <taxon>Streptophyta</taxon>
        <taxon>Embryophyta</taxon>
        <taxon>Tracheophyta</taxon>
        <taxon>Spermatophyta</taxon>
        <taxon>Magnoliopsida</taxon>
        <taxon>eudicotyledons</taxon>
        <taxon>Gunneridae</taxon>
        <taxon>Pentapetalae</taxon>
        <taxon>rosids</taxon>
        <taxon>malvids</taxon>
        <taxon>Brassicales</taxon>
        <taxon>Brassicaceae</taxon>
        <taxon>Camelineae</taxon>
        <taxon>Arabidopsis</taxon>
    </lineage>
</organism>